<dbReference type="EC" id="2.1.2.11" evidence="1"/>
<dbReference type="EMBL" id="CP000450">
    <property type="protein sequence ID" value="ABI60510.1"/>
    <property type="molecule type" value="Genomic_DNA"/>
</dbReference>
<dbReference type="RefSeq" id="WP_011635286.1">
    <property type="nucleotide sequence ID" value="NC_008344.1"/>
</dbReference>
<dbReference type="SMR" id="Q0ADS2"/>
<dbReference type="STRING" id="335283.Neut_2293"/>
<dbReference type="KEGG" id="net:Neut_2293"/>
<dbReference type="eggNOG" id="COG0413">
    <property type="taxonomic scope" value="Bacteria"/>
</dbReference>
<dbReference type="HOGENOM" id="CLU_036645_1_0_4"/>
<dbReference type="OrthoDB" id="9781789at2"/>
<dbReference type="UniPathway" id="UPA00028">
    <property type="reaction ID" value="UER00003"/>
</dbReference>
<dbReference type="Proteomes" id="UP000001966">
    <property type="component" value="Chromosome"/>
</dbReference>
<dbReference type="GO" id="GO:0005737">
    <property type="term" value="C:cytoplasm"/>
    <property type="evidence" value="ECO:0007669"/>
    <property type="project" value="UniProtKB-SubCell"/>
</dbReference>
<dbReference type="GO" id="GO:0003864">
    <property type="term" value="F:3-methyl-2-oxobutanoate hydroxymethyltransferase activity"/>
    <property type="evidence" value="ECO:0007669"/>
    <property type="project" value="UniProtKB-UniRule"/>
</dbReference>
<dbReference type="GO" id="GO:0000287">
    <property type="term" value="F:magnesium ion binding"/>
    <property type="evidence" value="ECO:0007669"/>
    <property type="project" value="TreeGrafter"/>
</dbReference>
<dbReference type="GO" id="GO:0015940">
    <property type="term" value="P:pantothenate biosynthetic process"/>
    <property type="evidence" value="ECO:0007669"/>
    <property type="project" value="UniProtKB-UniRule"/>
</dbReference>
<dbReference type="CDD" id="cd06557">
    <property type="entry name" value="KPHMT-like"/>
    <property type="match status" value="1"/>
</dbReference>
<dbReference type="FunFam" id="3.20.20.60:FF:000003">
    <property type="entry name" value="3-methyl-2-oxobutanoate hydroxymethyltransferase"/>
    <property type="match status" value="1"/>
</dbReference>
<dbReference type="Gene3D" id="3.20.20.60">
    <property type="entry name" value="Phosphoenolpyruvate-binding domains"/>
    <property type="match status" value="1"/>
</dbReference>
<dbReference type="HAMAP" id="MF_00156">
    <property type="entry name" value="PanB"/>
    <property type="match status" value="1"/>
</dbReference>
<dbReference type="InterPro" id="IPR003700">
    <property type="entry name" value="Pantoate_hydroxy_MeTrfase"/>
</dbReference>
<dbReference type="InterPro" id="IPR015813">
    <property type="entry name" value="Pyrv/PenolPyrv_kinase-like_dom"/>
</dbReference>
<dbReference type="InterPro" id="IPR040442">
    <property type="entry name" value="Pyrv_kinase-like_dom_sf"/>
</dbReference>
<dbReference type="NCBIfam" id="TIGR00222">
    <property type="entry name" value="panB"/>
    <property type="match status" value="1"/>
</dbReference>
<dbReference type="NCBIfam" id="NF001452">
    <property type="entry name" value="PRK00311.1"/>
    <property type="match status" value="1"/>
</dbReference>
<dbReference type="PANTHER" id="PTHR20881">
    <property type="entry name" value="3-METHYL-2-OXOBUTANOATE HYDROXYMETHYLTRANSFERASE"/>
    <property type="match status" value="1"/>
</dbReference>
<dbReference type="PANTHER" id="PTHR20881:SF0">
    <property type="entry name" value="3-METHYL-2-OXOBUTANOATE HYDROXYMETHYLTRANSFERASE"/>
    <property type="match status" value="1"/>
</dbReference>
<dbReference type="Pfam" id="PF02548">
    <property type="entry name" value="Pantoate_transf"/>
    <property type="match status" value="1"/>
</dbReference>
<dbReference type="PIRSF" id="PIRSF000388">
    <property type="entry name" value="Pantoate_hydroxy_MeTrfase"/>
    <property type="match status" value="1"/>
</dbReference>
<dbReference type="SUPFAM" id="SSF51621">
    <property type="entry name" value="Phosphoenolpyruvate/pyruvate domain"/>
    <property type="match status" value="1"/>
</dbReference>
<comment type="function">
    <text evidence="1">Catalyzes the reversible reaction in which hydroxymethyl group from 5,10-methylenetetrahydrofolate is transferred onto alpha-ketoisovalerate to form ketopantoate.</text>
</comment>
<comment type="catalytic activity">
    <reaction evidence="1">
        <text>3-methyl-2-oxobutanoate + (6R)-5,10-methylene-5,6,7,8-tetrahydrofolate + H2O = 2-dehydropantoate + (6S)-5,6,7,8-tetrahydrofolate</text>
        <dbReference type="Rhea" id="RHEA:11824"/>
        <dbReference type="ChEBI" id="CHEBI:11561"/>
        <dbReference type="ChEBI" id="CHEBI:11851"/>
        <dbReference type="ChEBI" id="CHEBI:15377"/>
        <dbReference type="ChEBI" id="CHEBI:15636"/>
        <dbReference type="ChEBI" id="CHEBI:57453"/>
        <dbReference type="EC" id="2.1.2.11"/>
    </reaction>
</comment>
<comment type="cofactor">
    <cofactor evidence="1">
        <name>Mg(2+)</name>
        <dbReference type="ChEBI" id="CHEBI:18420"/>
    </cofactor>
    <text evidence="1">Binds 1 Mg(2+) ion per subunit.</text>
</comment>
<comment type="pathway">
    <text evidence="1">Cofactor biosynthesis; (R)-pantothenate biosynthesis; (R)-pantoate from 3-methyl-2-oxobutanoate: step 1/2.</text>
</comment>
<comment type="subunit">
    <text evidence="1">Homodecamer; pentamer of dimers.</text>
</comment>
<comment type="subcellular location">
    <subcellularLocation>
        <location evidence="1">Cytoplasm</location>
    </subcellularLocation>
</comment>
<comment type="similarity">
    <text evidence="1">Belongs to the PanB family.</text>
</comment>
<name>PANB_NITEC</name>
<feature type="chain" id="PRO_0000297310" description="3-methyl-2-oxobutanoate hydroxymethyltransferase">
    <location>
        <begin position="1"/>
        <end position="269"/>
    </location>
</feature>
<feature type="active site" description="Proton acceptor" evidence="1">
    <location>
        <position position="187"/>
    </location>
</feature>
<feature type="binding site" evidence="1">
    <location>
        <begin position="50"/>
        <end position="51"/>
    </location>
    <ligand>
        <name>3-methyl-2-oxobutanoate</name>
        <dbReference type="ChEBI" id="CHEBI:11851"/>
    </ligand>
</feature>
<feature type="binding site" evidence="1">
    <location>
        <position position="50"/>
    </location>
    <ligand>
        <name>Mg(2+)</name>
        <dbReference type="ChEBI" id="CHEBI:18420"/>
    </ligand>
</feature>
<feature type="binding site" evidence="1">
    <location>
        <position position="89"/>
    </location>
    <ligand>
        <name>3-methyl-2-oxobutanoate</name>
        <dbReference type="ChEBI" id="CHEBI:11851"/>
    </ligand>
</feature>
<feature type="binding site" evidence="1">
    <location>
        <position position="89"/>
    </location>
    <ligand>
        <name>Mg(2+)</name>
        <dbReference type="ChEBI" id="CHEBI:18420"/>
    </ligand>
</feature>
<feature type="binding site" evidence="1">
    <location>
        <position position="118"/>
    </location>
    <ligand>
        <name>3-methyl-2-oxobutanoate</name>
        <dbReference type="ChEBI" id="CHEBI:11851"/>
    </ligand>
</feature>
<feature type="binding site" evidence="1">
    <location>
        <position position="120"/>
    </location>
    <ligand>
        <name>Mg(2+)</name>
        <dbReference type="ChEBI" id="CHEBI:18420"/>
    </ligand>
</feature>
<accession>Q0ADS2</accession>
<proteinExistence type="inferred from homology"/>
<gene>
    <name evidence="1" type="primary">panB</name>
    <name type="ordered locus">Neut_2293</name>
</gene>
<reference key="1">
    <citation type="journal article" date="2007" name="Environ. Microbiol.">
        <title>Whole-genome analysis of the ammonia-oxidizing bacterium, Nitrosomonas eutropha C91: implications for niche adaptation.</title>
        <authorList>
            <person name="Stein L.Y."/>
            <person name="Arp D.J."/>
            <person name="Berube P.M."/>
            <person name="Chain P.S."/>
            <person name="Hauser L."/>
            <person name="Jetten M.S."/>
            <person name="Klotz M.G."/>
            <person name="Larimer F.W."/>
            <person name="Norton J.M."/>
            <person name="Op den Camp H.J.M."/>
            <person name="Shin M."/>
            <person name="Wei X."/>
        </authorList>
    </citation>
    <scope>NUCLEOTIDE SEQUENCE [LARGE SCALE GENOMIC DNA]</scope>
    <source>
        <strain>DSM 101675 / C91 / Nm57</strain>
    </source>
</reference>
<organism>
    <name type="scientific">Nitrosomonas eutropha (strain DSM 101675 / C91 / Nm57)</name>
    <dbReference type="NCBI Taxonomy" id="335283"/>
    <lineage>
        <taxon>Bacteria</taxon>
        <taxon>Pseudomonadati</taxon>
        <taxon>Pseudomonadota</taxon>
        <taxon>Betaproteobacteria</taxon>
        <taxon>Nitrosomonadales</taxon>
        <taxon>Nitrosomonadaceae</taxon>
        <taxon>Nitrosomonas</taxon>
    </lineage>
</organism>
<sequence>MDRPVTKRITVLTLQNIYREKGKIAALTCYDATFAAVLENAGVDILLVGDSLGNVIQGQASTLPVTLDEMIYHVCCVERGTHSVFILADMPFGTFQVSPQEAFRNAVRLMAAGAQMVKVEGGRHMAETIEFLTCRGIPVCAHIGLIPQSVHQLGGYKIQGKTPDGARQLLEDALLLQKAGAAMLVMELIPAALGEEITRSLSIPTIGIGAGAVCSGQVLVLHDMLGISSGTLPRFVKNFMAGADSIQVAVRNYVKAVKTGEFPAHEHMF</sequence>
<evidence type="ECO:0000255" key="1">
    <source>
        <dbReference type="HAMAP-Rule" id="MF_00156"/>
    </source>
</evidence>
<protein>
    <recommendedName>
        <fullName evidence="1">3-methyl-2-oxobutanoate hydroxymethyltransferase</fullName>
        <ecNumber evidence="1">2.1.2.11</ecNumber>
    </recommendedName>
    <alternativeName>
        <fullName evidence="1">Ketopantoate hydroxymethyltransferase</fullName>
        <shortName evidence="1">KPHMT</shortName>
    </alternativeName>
</protein>
<keyword id="KW-0963">Cytoplasm</keyword>
<keyword id="KW-0460">Magnesium</keyword>
<keyword id="KW-0479">Metal-binding</keyword>
<keyword id="KW-0566">Pantothenate biosynthesis</keyword>
<keyword id="KW-0808">Transferase</keyword>